<sequence length="645" mass="72217">MNASSEGESFAGSVQIPGGTTVLVELTPDIHICGICKQQFNNLDAFVAHKQSGCQLTGTSAAAPSTVQFVSEETVPATQTQTTTRTITSETQTITVSAPEFVFEHGYQTYLPTESNENQTATVISLPAKSRTKKPTTPPAQKRLNCCYPGCQFKTAYGMKDMERHLKIHTGDKPHKCEVCGKCFSRKDKLKTHMRCHTGVKPYKCKTCDYAAADSSSLNKHLRIHSDERPFKCQICPYASRNSSQLTVHLRSHTASELDDDVPKANCLSTESTDTPKAPVITLPSEAREQMATLGERTFNCCYPGCHFKTVHGMKDLDRHLRIHTGDKPHKCEFCDKCFSRKDNLTMHMRCHTSVKPHKCHLCDYAAVDSSSLKKHLRIHSDERPYKCQLCPYASRNSSQLTVHLRSHTGDTPFQCWLCSAKFKISSDLKRHMIVHSGEKPFKCEFCDVRCTMKANLKSHIRIKHTFKCLHCAFQGRDRADLLEHSRLHQADHPEKCPECSYSCSSAAALRVHSRVHCKDRPFKCDFCSFDTKRPSSLAKHVDKVHRDEAKTENRAPLGKEGLREGSSQHVAKIVTQRAFRCETCGASFVRDDSLRCHKKQHSDQSENKNSDLVTFPPESGASGQLSTLVSVGQLEAPLEPSQDL</sequence>
<protein>
    <recommendedName>
        <fullName evidence="9">Zinc finger protein 64</fullName>
        <shortName>Zfp-64</shortName>
    </recommendedName>
    <alternativeName>
        <fullName evidence="10">Zinc finger protein 338</fullName>
    </alternativeName>
</protein>
<keyword id="KW-0002">3D-structure</keyword>
<keyword id="KW-0025">Alternative splicing</keyword>
<keyword id="KW-0238">DNA-binding</keyword>
<keyword id="KW-1017">Isopeptide bond</keyword>
<keyword id="KW-0479">Metal-binding</keyword>
<keyword id="KW-0539">Nucleus</keyword>
<keyword id="KW-0597">Phosphoprotein</keyword>
<keyword id="KW-1267">Proteomics identification</keyword>
<keyword id="KW-1185">Reference proteome</keyword>
<keyword id="KW-0677">Repeat</keyword>
<keyword id="KW-0804">Transcription</keyword>
<keyword id="KW-0805">Transcription regulation</keyword>
<keyword id="KW-0832">Ubl conjugation</keyword>
<keyword id="KW-0862">Zinc</keyword>
<keyword id="KW-0863">Zinc-finger</keyword>
<gene>
    <name evidence="10" type="primary">ZFP64</name>
    <name evidence="10" type="synonym">ZNF338</name>
</gene>
<evidence type="ECO:0000250" key="1">
    <source>
        <dbReference type="UniProtKB" id="Q99KE8"/>
    </source>
</evidence>
<evidence type="ECO:0000255" key="2">
    <source>
        <dbReference type="PROSITE-ProRule" id="PRU00042"/>
    </source>
</evidence>
<evidence type="ECO:0000256" key="3">
    <source>
        <dbReference type="SAM" id="MobiDB-lite"/>
    </source>
</evidence>
<evidence type="ECO:0000269" key="4">
    <source>
    </source>
</evidence>
<evidence type="ECO:0000269" key="5">
    <source>
    </source>
</evidence>
<evidence type="ECO:0000269" key="6">
    <source>
    </source>
</evidence>
<evidence type="ECO:0000303" key="7">
    <source>
    </source>
</evidence>
<evidence type="ECO:0000303" key="8">
    <source ref="3"/>
</evidence>
<evidence type="ECO:0000305" key="9"/>
<evidence type="ECO:0000312" key="10">
    <source>
        <dbReference type="HGNC" id="HGNC:15940"/>
    </source>
</evidence>
<evidence type="ECO:0007744" key="11">
    <source>
    </source>
</evidence>
<evidence type="ECO:0007744" key="12">
    <source>
    </source>
</evidence>
<evidence type="ECO:0007829" key="13">
    <source>
        <dbReference type="PDB" id="1X5W"/>
    </source>
</evidence>
<evidence type="ECO:0007829" key="14">
    <source>
        <dbReference type="PDB" id="2DMD"/>
    </source>
</evidence>
<proteinExistence type="evidence at protein level"/>
<reference key="1">
    <citation type="journal article" date="2004" name="Nat. Genet.">
        <title>Complete sequencing and characterization of 21,243 full-length human cDNAs.</title>
        <authorList>
            <person name="Ota T."/>
            <person name="Suzuki Y."/>
            <person name="Nishikawa T."/>
            <person name="Otsuki T."/>
            <person name="Sugiyama T."/>
            <person name="Irie R."/>
            <person name="Wakamatsu A."/>
            <person name="Hayashi K."/>
            <person name="Sato H."/>
            <person name="Nagai K."/>
            <person name="Kimura K."/>
            <person name="Makita H."/>
            <person name="Sekine M."/>
            <person name="Obayashi M."/>
            <person name="Nishi T."/>
            <person name="Shibahara T."/>
            <person name="Tanaka T."/>
            <person name="Ishii S."/>
            <person name="Yamamoto J."/>
            <person name="Saito K."/>
            <person name="Kawai Y."/>
            <person name="Isono Y."/>
            <person name="Nakamura Y."/>
            <person name="Nagahari K."/>
            <person name="Murakami K."/>
            <person name="Yasuda T."/>
            <person name="Iwayanagi T."/>
            <person name="Wagatsuma M."/>
            <person name="Shiratori A."/>
            <person name="Sudo H."/>
            <person name="Hosoiri T."/>
            <person name="Kaku Y."/>
            <person name="Kodaira H."/>
            <person name="Kondo H."/>
            <person name="Sugawara M."/>
            <person name="Takahashi M."/>
            <person name="Kanda K."/>
            <person name="Yokoi T."/>
            <person name="Furuya T."/>
            <person name="Kikkawa E."/>
            <person name="Omura Y."/>
            <person name="Abe K."/>
            <person name="Kamihara K."/>
            <person name="Katsuta N."/>
            <person name="Sato K."/>
            <person name="Tanikawa M."/>
            <person name="Yamazaki M."/>
            <person name="Ninomiya K."/>
            <person name="Ishibashi T."/>
            <person name="Yamashita H."/>
            <person name="Murakawa K."/>
            <person name="Fujimori K."/>
            <person name="Tanai H."/>
            <person name="Kimata M."/>
            <person name="Watanabe M."/>
            <person name="Hiraoka S."/>
            <person name="Chiba Y."/>
            <person name="Ishida S."/>
            <person name="Ono Y."/>
            <person name="Takiguchi S."/>
            <person name="Watanabe S."/>
            <person name="Yosida M."/>
            <person name="Hotuta T."/>
            <person name="Kusano J."/>
            <person name="Kanehori K."/>
            <person name="Takahashi-Fujii A."/>
            <person name="Hara H."/>
            <person name="Tanase T.-O."/>
            <person name="Nomura Y."/>
            <person name="Togiya S."/>
            <person name="Komai F."/>
            <person name="Hara R."/>
            <person name="Takeuchi K."/>
            <person name="Arita M."/>
            <person name="Imose N."/>
            <person name="Musashino K."/>
            <person name="Yuuki H."/>
            <person name="Oshima A."/>
            <person name="Sasaki N."/>
            <person name="Aotsuka S."/>
            <person name="Yoshikawa Y."/>
            <person name="Matsunawa H."/>
            <person name="Ichihara T."/>
            <person name="Shiohata N."/>
            <person name="Sano S."/>
            <person name="Moriya S."/>
            <person name="Momiyama H."/>
            <person name="Satoh N."/>
            <person name="Takami S."/>
            <person name="Terashima Y."/>
            <person name="Suzuki O."/>
            <person name="Nakagawa S."/>
            <person name="Senoh A."/>
            <person name="Mizoguchi H."/>
            <person name="Goto Y."/>
            <person name="Shimizu F."/>
            <person name="Wakebe H."/>
            <person name="Hishigaki H."/>
            <person name="Watanabe T."/>
            <person name="Sugiyama A."/>
            <person name="Takemoto M."/>
            <person name="Kawakami B."/>
            <person name="Yamazaki M."/>
            <person name="Watanabe K."/>
            <person name="Kumagai A."/>
            <person name="Itakura S."/>
            <person name="Fukuzumi Y."/>
            <person name="Fujimori Y."/>
            <person name="Komiyama M."/>
            <person name="Tashiro H."/>
            <person name="Tanigami A."/>
            <person name="Fujiwara T."/>
            <person name="Ono T."/>
            <person name="Yamada K."/>
            <person name="Fujii Y."/>
            <person name="Ozaki K."/>
            <person name="Hirao M."/>
            <person name="Ohmori Y."/>
            <person name="Kawabata A."/>
            <person name="Hikiji T."/>
            <person name="Kobatake N."/>
            <person name="Inagaki H."/>
            <person name="Ikema Y."/>
            <person name="Okamoto S."/>
            <person name="Okitani R."/>
            <person name="Kawakami T."/>
            <person name="Noguchi S."/>
            <person name="Itoh T."/>
            <person name="Shigeta K."/>
            <person name="Senba T."/>
            <person name="Matsumura K."/>
            <person name="Nakajima Y."/>
            <person name="Mizuno T."/>
            <person name="Morinaga M."/>
            <person name="Sasaki M."/>
            <person name="Togashi T."/>
            <person name="Oyama M."/>
            <person name="Hata H."/>
            <person name="Watanabe M."/>
            <person name="Komatsu T."/>
            <person name="Mizushima-Sugano J."/>
            <person name="Satoh T."/>
            <person name="Shirai Y."/>
            <person name="Takahashi Y."/>
            <person name="Nakagawa K."/>
            <person name="Okumura K."/>
            <person name="Nagase T."/>
            <person name="Nomura N."/>
            <person name="Kikuchi H."/>
            <person name="Masuho Y."/>
            <person name="Yamashita R."/>
            <person name="Nakai K."/>
            <person name="Yada T."/>
            <person name="Nakamura Y."/>
            <person name="Ohara O."/>
            <person name="Isogai T."/>
            <person name="Sugano S."/>
        </authorList>
    </citation>
    <scope>NUCLEOTIDE SEQUENCE [LARGE SCALE MRNA] (ISOFORMS 1; 2 AND 4)</scope>
    <scope>VARIANT ASN-451 (ISOFORM 2)</scope>
    <source>
        <tissue>Teratocarcinoma</tissue>
    </source>
</reference>
<reference key="2">
    <citation type="submission" date="2003-08" db="EMBL/GenBank/DDBJ databases">
        <title>Cloning of human full-length CDSs in BD Creator(TM) system donor vector.</title>
        <authorList>
            <person name="Kalnine N."/>
            <person name="Chen X."/>
            <person name="Rolfs A."/>
            <person name="Halleck A."/>
            <person name="Hines L."/>
            <person name="Eisenstein S."/>
            <person name="Koundinya M."/>
            <person name="Raphael J."/>
            <person name="Moreira D."/>
            <person name="Kelley T."/>
            <person name="LaBaer J."/>
            <person name="Lin Y."/>
            <person name="Phelan M."/>
            <person name="Farmer A."/>
        </authorList>
    </citation>
    <scope>NUCLEOTIDE SEQUENCE [LARGE SCALE MRNA] (ISOFORM 3)</scope>
</reference>
<reference key="3">
    <citation type="submission" date="2005-04" db="EMBL/GenBank/DDBJ databases">
        <authorList>
            <person name="Suzuki Y."/>
            <person name="Sugano S."/>
            <person name="Totoki Y."/>
            <person name="Toyoda A."/>
            <person name="Takeda T."/>
            <person name="Sakaki Y."/>
            <person name="Tanaka A."/>
            <person name="Yokoyama S."/>
        </authorList>
    </citation>
    <scope>NUCLEOTIDE SEQUENCE [LARGE SCALE MRNA] (ISOFORM 5)</scope>
    <source>
        <tissue>Colon</tissue>
    </source>
</reference>
<reference key="4">
    <citation type="journal article" date="2001" name="Nature">
        <title>The DNA sequence and comparative analysis of human chromosome 20.</title>
        <authorList>
            <person name="Deloukas P."/>
            <person name="Matthews L.H."/>
            <person name="Ashurst J.L."/>
            <person name="Burton J."/>
            <person name="Gilbert J.G.R."/>
            <person name="Jones M."/>
            <person name="Stavrides G."/>
            <person name="Almeida J.P."/>
            <person name="Babbage A.K."/>
            <person name="Bagguley C.L."/>
            <person name="Bailey J."/>
            <person name="Barlow K.F."/>
            <person name="Bates K.N."/>
            <person name="Beard L.M."/>
            <person name="Beare D.M."/>
            <person name="Beasley O.P."/>
            <person name="Bird C.P."/>
            <person name="Blakey S.E."/>
            <person name="Bridgeman A.M."/>
            <person name="Brown A.J."/>
            <person name="Buck D."/>
            <person name="Burrill W.D."/>
            <person name="Butler A.P."/>
            <person name="Carder C."/>
            <person name="Carter N.P."/>
            <person name="Chapman J.C."/>
            <person name="Clamp M."/>
            <person name="Clark G."/>
            <person name="Clark L.N."/>
            <person name="Clark S.Y."/>
            <person name="Clee C.M."/>
            <person name="Clegg S."/>
            <person name="Cobley V.E."/>
            <person name="Collier R.E."/>
            <person name="Connor R.E."/>
            <person name="Corby N.R."/>
            <person name="Coulson A."/>
            <person name="Coville G.J."/>
            <person name="Deadman R."/>
            <person name="Dhami P.D."/>
            <person name="Dunn M."/>
            <person name="Ellington A.G."/>
            <person name="Frankland J.A."/>
            <person name="Fraser A."/>
            <person name="French L."/>
            <person name="Garner P."/>
            <person name="Grafham D.V."/>
            <person name="Griffiths C."/>
            <person name="Griffiths M.N.D."/>
            <person name="Gwilliam R."/>
            <person name="Hall R.E."/>
            <person name="Hammond S."/>
            <person name="Harley J.L."/>
            <person name="Heath P.D."/>
            <person name="Ho S."/>
            <person name="Holden J.L."/>
            <person name="Howden P.J."/>
            <person name="Huckle E."/>
            <person name="Hunt A.R."/>
            <person name="Hunt S.E."/>
            <person name="Jekosch K."/>
            <person name="Johnson C.M."/>
            <person name="Johnson D."/>
            <person name="Kay M.P."/>
            <person name="Kimberley A.M."/>
            <person name="King A."/>
            <person name="Knights A."/>
            <person name="Laird G.K."/>
            <person name="Lawlor S."/>
            <person name="Lehvaeslaiho M.H."/>
            <person name="Leversha M.A."/>
            <person name="Lloyd C."/>
            <person name="Lloyd D.M."/>
            <person name="Lovell J.D."/>
            <person name="Marsh V.L."/>
            <person name="Martin S.L."/>
            <person name="McConnachie L.J."/>
            <person name="McLay K."/>
            <person name="McMurray A.A."/>
            <person name="Milne S.A."/>
            <person name="Mistry D."/>
            <person name="Moore M.J.F."/>
            <person name="Mullikin J.C."/>
            <person name="Nickerson T."/>
            <person name="Oliver K."/>
            <person name="Parker A."/>
            <person name="Patel R."/>
            <person name="Pearce T.A.V."/>
            <person name="Peck A.I."/>
            <person name="Phillimore B.J.C.T."/>
            <person name="Prathalingam S.R."/>
            <person name="Plumb R.W."/>
            <person name="Ramsay H."/>
            <person name="Rice C.M."/>
            <person name="Ross M.T."/>
            <person name="Scott C.E."/>
            <person name="Sehra H.K."/>
            <person name="Shownkeen R."/>
            <person name="Sims S."/>
            <person name="Skuce C.D."/>
            <person name="Smith M.L."/>
            <person name="Soderlund C."/>
            <person name="Steward C.A."/>
            <person name="Sulston J.E."/>
            <person name="Swann R.M."/>
            <person name="Sycamore N."/>
            <person name="Taylor R."/>
            <person name="Tee L."/>
            <person name="Thomas D.W."/>
            <person name="Thorpe A."/>
            <person name="Tracey A."/>
            <person name="Tromans A.C."/>
            <person name="Vaudin M."/>
            <person name="Wall M."/>
            <person name="Wallis J.M."/>
            <person name="Whitehead S.L."/>
            <person name="Whittaker P."/>
            <person name="Willey D.L."/>
            <person name="Williams L."/>
            <person name="Williams S.A."/>
            <person name="Wilming L."/>
            <person name="Wray P.W."/>
            <person name="Hubbard T."/>
            <person name="Durbin R.M."/>
            <person name="Bentley D.R."/>
            <person name="Beck S."/>
            <person name="Rogers J."/>
        </authorList>
    </citation>
    <scope>NUCLEOTIDE SEQUENCE [LARGE SCALE GENOMIC DNA]</scope>
</reference>
<reference key="5">
    <citation type="submission" date="2005-09" db="EMBL/GenBank/DDBJ databases">
        <authorList>
            <person name="Mural R.J."/>
            <person name="Istrail S."/>
            <person name="Sutton G.G."/>
            <person name="Florea L."/>
            <person name="Halpern A.L."/>
            <person name="Mobarry C.M."/>
            <person name="Lippert R."/>
            <person name="Walenz B."/>
            <person name="Shatkay H."/>
            <person name="Dew I."/>
            <person name="Miller J.R."/>
            <person name="Flanigan M.J."/>
            <person name="Edwards N.J."/>
            <person name="Bolanos R."/>
            <person name="Fasulo D."/>
            <person name="Halldorsson B.V."/>
            <person name="Hannenhalli S."/>
            <person name="Turner R."/>
            <person name="Yooseph S."/>
            <person name="Lu F."/>
            <person name="Nusskern D.R."/>
            <person name="Shue B.C."/>
            <person name="Zheng X.H."/>
            <person name="Zhong F."/>
            <person name="Delcher A.L."/>
            <person name="Huson D.H."/>
            <person name="Kravitz S.A."/>
            <person name="Mouchard L."/>
            <person name="Reinert K."/>
            <person name="Remington K.A."/>
            <person name="Clark A.G."/>
            <person name="Waterman M.S."/>
            <person name="Eichler E.E."/>
            <person name="Adams M.D."/>
            <person name="Hunkapiller M.W."/>
            <person name="Myers E.W."/>
            <person name="Venter J.C."/>
        </authorList>
    </citation>
    <scope>NUCLEOTIDE SEQUENCE [LARGE SCALE GENOMIC DNA]</scope>
</reference>
<reference key="6">
    <citation type="journal article" date="2004" name="Genome Res.">
        <title>The status, quality, and expansion of the NIH full-length cDNA project: the Mammalian Gene Collection (MGC).</title>
        <authorList>
            <consortium name="The MGC Project Team"/>
        </authorList>
    </citation>
    <scope>NUCLEOTIDE SEQUENCE [LARGE SCALE MRNA] (ISOFORMS 1 AND 3)</scope>
    <scope>VARIANT ASN-451 (ISOFORM 1)</scope>
    <source>
        <tissue>Lymph</tissue>
    </source>
</reference>
<reference key="7">
    <citation type="journal article" date="2008" name="J. Cell Sci.">
        <title>Zfp64 participates in Notch signaling and regulates differentiation in mesenchymal cells.</title>
        <authorList>
            <person name="Sakamoto K."/>
            <person name="Tamamura Y."/>
            <person name="Katsube K."/>
            <person name="Yamaguchi A."/>
        </authorList>
    </citation>
    <scope>INTERACTION WITH NOTCH1</scope>
</reference>
<reference key="8">
    <citation type="journal article" date="2013" name="J. Proteome Res.">
        <title>Toward a comprehensive characterization of a human cancer cell phosphoproteome.</title>
        <authorList>
            <person name="Zhou H."/>
            <person name="Di Palma S."/>
            <person name="Preisinger C."/>
            <person name="Peng M."/>
            <person name="Polat A.N."/>
            <person name="Heck A.J."/>
            <person name="Mohammed S."/>
        </authorList>
    </citation>
    <scope>PHOSPHORYLATION [LARGE SCALE ANALYSIS] AT SER-545 (ISOFORM 6)</scope>
    <scope>IDENTIFICATION BY MASS SPECTROMETRY [LARGE SCALE ANALYSIS]</scope>
    <source>
        <tissue>Cervix carcinoma</tissue>
        <tissue>Erythroleukemia</tissue>
    </source>
</reference>
<reference key="9">
    <citation type="journal article" date="2016" name="Biochem. Biophys. Res. Commun.">
        <title>ZNF70, a novel ILDR2-interacting protein, contributes to the regulation of HES1 gene expression.</title>
        <authorList>
            <person name="Watanabe K."/>
            <person name="Nakayama K."/>
            <person name="Ohta S."/>
            <person name="Tago K."/>
            <person name="Boonvisut S."/>
            <person name="Millings E.J."/>
            <person name="Fischer S.G."/>
            <person name="LeDuc C.A."/>
            <person name="Leibel R.L."/>
            <person name="Iwamoto S."/>
        </authorList>
    </citation>
    <scope>INTERACTION WITH ZNF70</scope>
    <scope>SUBCELLULAR LOCATION</scope>
</reference>
<reference key="10">
    <citation type="journal article" date="2017" name="Nat. Struct. Mol. Biol.">
        <title>Site-specific mapping of the human SUMO proteome reveals co-modification with phosphorylation.</title>
        <authorList>
            <person name="Hendriks I.A."/>
            <person name="Lyon D."/>
            <person name="Young C."/>
            <person name="Jensen L.J."/>
            <person name="Vertegaal A.C."/>
            <person name="Nielsen M.L."/>
        </authorList>
    </citation>
    <scope>SUMOYLATION [LARGE SCALE ANALYSIS] AT LYS-286 AND LYS-397 (ISOFORM 6)</scope>
    <scope>IDENTIFICATION BY MASS SPECTROMETRY [LARGE SCALE ANALYSIS]</scope>
</reference>
<reference key="11">
    <citation type="submission" date="2005-05" db="PDB data bank">
        <title>Solution structure of the C2H2 type zinc-binding domain of human zinc finger protein 64, isoforms 1 and 2.</title>
        <authorList>
            <consortium name="RIKEN structural genomics initiative (RSGI)"/>
        </authorList>
    </citation>
    <scope>STRUCTURE BY NMR OF ZINC FINGER (ISOFORMS 1 AND 2)</scope>
</reference>
<reference key="12">
    <citation type="journal article" date="2006" name="Science">
        <title>The consensus coding sequences of human breast and colorectal cancers.</title>
        <authorList>
            <person name="Sjoeblom T."/>
            <person name="Jones S."/>
            <person name="Wood L.D."/>
            <person name="Parsons D.W."/>
            <person name="Lin J."/>
            <person name="Barber T.D."/>
            <person name="Mandelker D."/>
            <person name="Leary R.J."/>
            <person name="Ptak J."/>
            <person name="Silliman N."/>
            <person name="Szabo S."/>
            <person name="Buckhaults P."/>
            <person name="Farrell C."/>
            <person name="Meeh P."/>
            <person name="Markowitz S.D."/>
            <person name="Willis J."/>
            <person name="Dawson D."/>
            <person name="Willson J.K.V."/>
            <person name="Gazdar A.F."/>
            <person name="Hartigan J."/>
            <person name="Wu L."/>
            <person name="Liu C."/>
            <person name="Parmigiani G."/>
            <person name="Park B.H."/>
            <person name="Bachman K.E."/>
            <person name="Papadopoulos N."/>
            <person name="Vogelstein B."/>
            <person name="Kinzler K.W."/>
            <person name="Velculescu V.E."/>
        </authorList>
    </citation>
    <scope>VARIANTS [LARGE SCALE ANALYSIS] GLU-593 AND ASN-609</scope>
</reference>
<accession>Q9NTW7</accession>
<accession>A2A2N4</accession>
<accession>Q53H69</accession>
<accession>Q53XQ1</accession>
<accession>Q5JWM0</accession>
<accession>Q5JWM1</accession>
<accession>Q8WU98</accession>
<accession>Q9H9P1</accession>
<accession>Q9NPA5</accession>
<accession>Q9NTS7</accession>
<accession>Q9NVH4</accession>
<organism>
    <name type="scientific">Homo sapiens</name>
    <name type="common">Human</name>
    <dbReference type="NCBI Taxonomy" id="9606"/>
    <lineage>
        <taxon>Eukaryota</taxon>
        <taxon>Metazoa</taxon>
        <taxon>Chordata</taxon>
        <taxon>Craniata</taxon>
        <taxon>Vertebrata</taxon>
        <taxon>Euteleostomi</taxon>
        <taxon>Mammalia</taxon>
        <taxon>Eutheria</taxon>
        <taxon>Euarchontoglires</taxon>
        <taxon>Primates</taxon>
        <taxon>Haplorrhini</taxon>
        <taxon>Catarrhini</taxon>
        <taxon>Hominidae</taxon>
        <taxon>Homo</taxon>
    </lineage>
</organism>
<name>ZF64B_HUMAN</name>
<dbReference type="EMBL" id="AK001596">
    <property type="protein sequence ID" value="BAA91777.1"/>
    <property type="molecule type" value="mRNA"/>
</dbReference>
<dbReference type="EMBL" id="AK001744">
    <property type="protein sequence ID" value="BAA91876.1"/>
    <property type="molecule type" value="mRNA"/>
</dbReference>
<dbReference type="EMBL" id="AK022690">
    <property type="protein sequence ID" value="BAB14182.1"/>
    <property type="molecule type" value="mRNA"/>
</dbReference>
<dbReference type="EMBL" id="BT009760">
    <property type="protein sequence ID" value="AAP88762.1"/>
    <property type="molecule type" value="mRNA"/>
</dbReference>
<dbReference type="EMBL" id="AK222712">
    <property type="protein sequence ID" value="BAD96432.1"/>
    <property type="status" value="ALT_SEQ"/>
    <property type="molecule type" value="mRNA"/>
</dbReference>
<dbReference type="EMBL" id="AL109984">
    <property type="status" value="NOT_ANNOTATED_CDS"/>
    <property type="molecule type" value="Genomic_DNA"/>
</dbReference>
<dbReference type="EMBL" id="AL121771">
    <property type="status" value="NOT_ANNOTATED_CDS"/>
    <property type="molecule type" value="Genomic_DNA"/>
</dbReference>
<dbReference type="EMBL" id="AL121923">
    <property type="status" value="NOT_ANNOTATED_CDS"/>
    <property type="molecule type" value="Genomic_DNA"/>
</dbReference>
<dbReference type="EMBL" id="CH471077">
    <property type="protein sequence ID" value="EAW75591.1"/>
    <property type="molecule type" value="Genomic_DNA"/>
</dbReference>
<dbReference type="EMBL" id="BC021087">
    <property type="status" value="NOT_ANNOTATED_CDS"/>
    <property type="molecule type" value="mRNA"/>
</dbReference>
<dbReference type="EMBL" id="BC012759">
    <property type="protein sequence ID" value="AAH12759.1"/>
    <property type="molecule type" value="mRNA"/>
</dbReference>
<dbReference type="EMBL" id="BC041622">
    <property type="protein sequence ID" value="AAH41622.1"/>
    <property type="molecule type" value="mRNA"/>
</dbReference>
<dbReference type="CCDS" id="CCDS13439.1">
    <molecule id="Q9NTW7-1"/>
</dbReference>
<dbReference type="CCDS" id="CCDS13440.1">
    <molecule id="Q9NTW7-5"/>
</dbReference>
<dbReference type="CCDS" id="CCDS13441.1">
    <molecule id="Q9NTW7-6"/>
</dbReference>
<dbReference type="CCDS" id="CCDS13442.1">
    <molecule id="Q9NTW7-4"/>
</dbReference>
<dbReference type="CCDS" id="CCDS82630.1">
    <molecule id="Q9NTW7-2"/>
</dbReference>
<dbReference type="RefSeq" id="NP_001306075.1">
    <molecule id="Q9NTW7-2"/>
    <property type="nucleotide sequence ID" value="NM_001319146.2"/>
</dbReference>
<dbReference type="RefSeq" id="NP_060667.2">
    <molecule id="Q9NTW7-5"/>
    <property type="nucleotide sequence ID" value="NM_018197.2"/>
</dbReference>
<dbReference type="RefSeq" id="NP_071371.3">
    <molecule id="Q9NTW7-6"/>
    <property type="nucleotide sequence ID" value="NM_022088.4"/>
</dbReference>
<dbReference type="RefSeq" id="NP_955458.1">
    <molecule id="Q9NTW7-4"/>
    <property type="nucleotide sequence ID" value="NM_199426.2"/>
</dbReference>
<dbReference type="RefSeq" id="NP_955459.2">
    <molecule id="Q9NTW7-1"/>
    <property type="nucleotide sequence ID" value="NM_199427.3"/>
</dbReference>
<dbReference type="PDB" id="1X5W">
    <property type="method" value="NMR"/>
    <property type="chains" value="A=-"/>
</dbReference>
<dbReference type="PDB" id="2DMD">
    <property type="method" value="NMR"/>
    <property type="chains" value="A=174-235"/>
</dbReference>
<dbReference type="PDBsum" id="1X5W"/>
<dbReference type="PDBsum" id="2DMD"/>
<dbReference type="SMR" id="Q9NTW7"/>
<dbReference type="BioGRID" id="120853">
    <property type="interactions" value="49"/>
</dbReference>
<dbReference type="FunCoup" id="Q9NTW7">
    <property type="interactions" value="1236"/>
</dbReference>
<dbReference type="IntAct" id="Q9NTW7">
    <property type="interactions" value="38"/>
</dbReference>
<dbReference type="MINT" id="Q9NTW7"/>
<dbReference type="STRING" id="9606.ENSP00000216923"/>
<dbReference type="GlyGen" id="Q9NTW7">
    <property type="glycosylation" value="1 site, 1 O-linked glycan (1 site)"/>
</dbReference>
<dbReference type="iPTMnet" id="Q9NTW7"/>
<dbReference type="PhosphoSitePlus" id="Q9NTW7"/>
<dbReference type="BioMuta" id="ZFP64"/>
<dbReference type="DMDM" id="30316391"/>
<dbReference type="jPOST" id="Q9NTW7"/>
<dbReference type="MassIVE" id="Q9NTW7"/>
<dbReference type="PaxDb" id="9606-ENSP00000216923"/>
<dbReference type="PeptideAtlas" id="Q9NTW7"/>
<dbReference type="ProteomicsDB" id="63393"/>
<dbReference type="ProteomicsDB" id="81951"/>
<dbReference type="ProteomicsDB" id="81952"/>
<dbReference type="ProteomicsDB" id="82633">
    <molecule id="Q9NTW7-1"/>
</dbReference>
<dbReference type="ProteomicsDB" id="82634">
    <molecule id="Q9NTW7-2"/>
</dbReference>
<dbReference type="ProteomicsDB" id="82635">
    <molecule id="Q9NTW7-3"/>
</dbReference>
<dbReference type="Pumba" id="Q9NTW7"/>
<dbReference type="Antibodypedia" id="13873">
    <property type="antibodies" value="202 antibodies from 26 providers"/>
</dbReference>
<dbReference type="DNASU" id="55734"/>
<dbReference type="Ensembl" id="ENST00000216923.5">
    <molecule id="Q9NTW7-5"/>
    <property type="protein sequence ID" value="ENSP00000216923.4"/>
    <property type="gene ID" value="ENSG00000020256.20"/>
</dbReference>
<dbReference type="Ensembl" id="ENST00000346617.8">
    <molecule id="Q9NTW7-6"/>
    <property type="protein sequence ID" value="ENSP00000344615.4"/>
    <property type="gene ID" value="ENSG00000020256.20"/>
</dbReference>
<dbReference type="Ensembl" id="ENST00000361387.6">
    <molecule id="Q9NTW7-1"/>
    <property type="protein sequence ID" value="ENSP00000355179.2"/>
    <property type="gene ID" value="ENSG00000020256.20"/>
</dbReference>
<dbReference type="Ensembl" id="ENST00000371515.8">
    <molecule id="Q9NTW7-4"/>
    <property type="protein sequence ID" value="ENSP00000360570.4"/>
    <property type="gene ID" value="ENSG00000020256.20"/>
</dbReference>
<dbReference type="Ensembl" id="ENST00000371518.6">
    <molecule id="Q9NTW7-3"/>
    <property type="protein sequence ID" value="ENSP00000360573.2"/>
    <property type="gene ID" value="ENSG00000020256.20"/>
</dbReference>
<dbReference type="Ensembl" id="ENST00000371523.8">
    <molecule id="Q9NTW7-2"/>
    <property type="protein sequence ID" value="ENSP00000360578.4"/>
    <property type="gene ID" value="ENSG00000020256.20"/>
</dbReference>
<dbReference type="GeneID" id="55734"/>
<dbReference type="KEGG" id="hsa:55734"/>
<dbReference type="MANE-Select" id="ENST00000216923.5">
    <molecule id="Q9NTW7-5"/>
    <property type="protein sequence ID" value="ENSP00000216923.4"/>
    <property type="RefSeq nucleotide sequence ID" value="NM_018197.3"/>
    <property type="RefSeq protein sequence ID" value="NP_060667.2"/>
</dbReference>
<dbReference type="UCSC" id="uc002xwj.4">
    <molecule id="Q9NTW7-1"/>
    <property type="organism name" value="human"/>
</dbReference>
<dbReference type="AGR" id="HGNC:15940"/>
<dbReference type="CTD" id="55734"/>
<dbReference type="DisGeNET" id="55734"/>
<dbReference type="GeneCards" id="ZFP64"/>
<dbReference type="HGNC" id="HGNC:15940">
    <property type="gene designation" value="ZFP64"/>
</dbReference>
<dbReference type="HPA" id="ENSG00000020256">
    <property type="expression patterns" value="Low tissue specificity"/>
</dbReference>
<dbReference type="MIM" id="618111">
    <property type="type" value="gene"/>
</dbReference>
<dbReference type="neXtProt" id="NX_Q9NTW7"/>
<dbReference type="OpenTargets" id="ENSG00000020256"/>
<dbReference type="PharmGKB" id="PA38060"/>
<dbReference type="VEuPathDB" id="HostDB:ENSG00000020256"/>
<dbReference type="eggNOG" id="KOG1721">
    <property type="taxonomic scope" value="Eukaryota"/>
</dbReference>
<dbReference type="GeneTree" id="ENSGT00940000156405"/>
<dbReference type="HOGENOM" id="CLU_002678_71_1_1"/>
<dbReference type="InParanoid" id="Q9NTW7"/>
<dbReference type="OMA" id="ENSFHCV"/>
<dbReference type="OrthoDB" id="654211at2759"/>
<dbReference type="PAN-GO" id="Q9NTW7">
    <property type="GO annotations" value="2 GO annotations based on evolutionary models"/>
</dbReference>
<dbReference type="TreeFam" id="TF333046"/>
<dbReference type="PathwayCommons" id="Q9NTW7"/>
<dbReference type="SignaLink" id="Q9NTW7"/>
<dbReference type="BioGRID-ORCS" id="55734">
    <property type="hits" value="32 hits in 1181 CRISPR screens"/>
</dbReference>
<dbReference type="ChiTaRS" id="ZFP64">
    <property type="organism name" value="human"/>
</dbReference>
<dbReference type="EvolutionaryTrace" id="Q9NTW7"/>
<dbReference type="GeneWiki" id="ZFP64"/>
<dbReference type="GenomeRNAi" id="55734"/>
<dbReference type="Pharos" id="Q9NTW7">
    <property type="development level" value="Tbio"/>
</dbReference>
<dbReference type="PRO" id="PR:Q9NTW7"/>
<dbReference type="Proteomes" id="UP000005640">
    <property type="component" value="Chromosome 20"/>
</dbReference>
<dbReference type="Bgee" id="ENSG00000020256">
    <property type="expression patterns" value="Expressed in germinal epithelium of ovary and 201 other cell types or tissues"/>
</dbReference>
<dbReference type="ExpressionAtlas" id="Q9NTW7">
    <property type="expression patterns" value="baseline and differential"/>
</dbReference>
<dbReference type="GO" id="GO:0005737">
    <property type="term" value="C:cytoplasm"/>
    <property type="evidence" value="ECO:0000314"/>
    <property type="project" value="UniProtKB"/>
</dbReference>
<dbReference type="GO" id="GO:0043076">
    <property type="term" value="C:megasporocyte nucleus"/>
    <property type="evidence" value="ECO:0000314"/>
    <property type="project" value="UniProtKB"/>
</dbReference>
<dbReference type="GO" id="GO:0005634">
    <property type="term" value="C:nucleus"/>
    <property type="evidence" value="ECO:0000318"/>
    <property type="project" value="GO_Central"/>
</dbReference>
<dbReference type="GO" id="GO:0003677">
    <property type="term" value="F:DNA binding"/>
    <property type="evidence" value="ECO:0007669"/>
    <property type="project" value="UniProtKB-KW"/>
</dbReference>
<dbReference type="GO" id="GO:0008270">
    <property type="term" value="F:zinc ion binding"/>
    <property type="evidence" value="ECO:0007669"/>
    <property type="project" value="UniProtKB-KW"/>
</dbReference>
<dbReference type="GO" id="GO:0048762">
    <property type="term" value="P:mesenchymal cell differentiation"/>
    <property type="evidence" value="ECO:0000315"/>
    <property type="project" value="UniProtKB"/>
</dbReference>
<dbReference type="GO" id="GO:0045944">
    <property type="term" value="P:positive regulation of transcription by RNA polymerase II"/>
    <property type="evidence" value="ECO:0000318"/>
    <property type="project" value="GO_Central"/>
</dbReference>
<dbReference type="FunFam" id="3.30.160.60:FF:000255">
    <property type="entry name" value="Zinc finger and AT-hook domain containing"/>
    <property type="match status" value="1"/>
</dbReference>
<dbReference type="FunFam" id="3.30.160.60:FF:001662">
    <property type="entry name" value="Zinc finger protein 64"/>
    <property type="match status" value="1"/>
</dbReference>
<dbReference type="FunFam" id="3.30.160.60:FF:000223">
    <property type="entry name" value="zinc finger protein 64 isoform X1"/>
    <property type="match status" value="1"/>
</dbReference>
<dbReference type="FunFam" id="3.30.160.60:FF:000412">
    <property type="entry name" value="zinc finger protein 64 isoform X1"/>
    <property type="match status" value="1"/>
</dbReference>
<dbReference type="FunFam" id="3.30.160.60:FF:000578">
    <property type="entry name" value="zinc finger protein 64 isoform X1"/>
    <property type="match status" value="1"/>
</dbReference>
<dbReference type="FunFam" id="3.30.160.60:FF:000660">
    <property type="entry name" value="zinc finger protein 64 isoform X1"/>
    <property type="match status" value="1"/>
</dbReference>
<dbReference type="FunFam" id="3.30.160.60:FF:000669">
    <property type="entry name" value="zinc finger protein 64 isoform X1"/>
    <property type="match status" value="1"/>
</dbReference>
<dbReference type="FunFam" id="3.30.160.60:FF:001010">
    <property type="entry name" value="zinc finger protein 64 isoform X3"/>
    <property type="match status" value="2"/>
</dbReference>
<dbReference type="FunFam" id="3.30.160.60:FF:002037">
    <property type="entry name" value="zinc finger protein 64 isoform X3"/>
    <property type="match status" value="1"/>
</dbReference>
<dbReference type="Gene3D" id="3.30.160.60">
    <property type="entry name" value="Classic Zinc Finger"/>
    <property type="match status" value="11"/>
</dbReference>
<dbReference type="InterPro" id="IPR050636">
    <property type="entry name" value="C2H2-ZF_domain-containing"/>
</dbReference>
<dbReference type="InterPro" id="IPR036236">
    <property type="entry name" value="Znf_C2H2_sf"/>
</dbReference>
<dbReference type="InterPro" id="IPR013087">
    <property type="entry name" value="Znf_C2H2_type"/>
</dbReference>
<dbReference type="PANTHER" id="PTHR47772:SF13">
    <property type="entry name" value="GASTRULA ZINC FINGER PROTEIN XLCGF49.1-LIKE-RELATED"/>
    <property type="match status" value="1"/>
</dbReference>
<dbReference type="PANTHER" id="PTHR47772">
    <property type="entry name" value="ZINC FINGER PROTEIN 200"/>
    <property type="match status" value="1"/>
</dbReference>
<dbReference type="Pfam" id="PF00096">
    <property type="entry name" value="zf-C2H2"/>
    <property type="match status" value="9"/>
</dbReference>
<dbReference type="SMART" id="SM00355">
    <property type="entry name" value="ZnF_C2H2"/>
    <property type="match status" value="15"/>
</dbReference>
<dbReference type="SUPFAM" id="SSF57667">
    <property type="entry name" value="beta-beta-alpha zinc fingers"/>
    <property type="match status" value="8"/>
</dbReference>
<dbReference type="PROSITE" id="PS00028">
    <property type="entry name" value="ZINC_FINGER_C2H2_1"/>
    <property type="match status" value="6"/>
</dbReference>
<dbReference type="PROSITE" id="PS50157">
    <property type="entry name" value="ZINC_FINGER_C2H2_2"/>
    <property type="match status" value="13"/>
</dbReference>
<feature type="chain" id="PRO_0000047308" description="Zinc finger protein 64">
    <location>
        <begin position="1"/>
        <end position="645"/>
    </location>
</feature>
<feature type="zinc finger region" description="C2H2-type 1" evidence="2">
    <location>
        <begin position="175"/>
        <end position="197"/>
    </location>
</feature>
<feature type="zinc finger region" description="C2H2-type 2" evidence="2">
    <location>
        <begin position="203"/>
        <end position="225"/>
    </location>
</feature>
<feature type="zinc finger region" description="C2H2-type 3" evidence="2">
    <location>
        <begin position="231"/>
        <end position="253"/>
    </location>
</feature>
<feature type="zinc finger region" description="C2H2-type 4; atypical" evidence="2">
    <location>
        <begin position="299"/>
        <end position="324"/>
    </location>
</feature>
<feature type="zinc finger region" description="C2H2-type 5" evidence="2">
    <location>
        <begin position="330"/>
        <end position="352"/>
    </location>
</feature>
<feature type="zinc finger region" description="C2H2-type 6" evidence="2">
    <location>
        <begin position="358"/>
        <end position="380"/>
    </location>
</feature>
<feature type="zinc finger region" description="C2H2-type 7" evidence="2">
    <location>
        <begin position="386"/>
        <end position="408"/>
    </location>
</feature>
<feature type="zinc finger region" description="C2H2-type 8" evidence="2">
    <location>
        <begin position="414"/>
        <end position="436"/>
    </location>
</feature>
<feature type="zinc finger region" description="C2H2-type 9" evidence="2">
    <location>
        <begin position="442"/>
        <end position="465"/>
    </location>
</feature>
<feature type="zinc finger region" description="C2H2-type 10" evidence="2">
    <location>
        <begin position="467"/>
        <end position="489"/>
    </location>
</feature>
<feature type="zinc finger region" description="C2H2-type 11" evidence="2">
    <location>
        <begin position="495"/>
        <end position="517"/>
    </location>
</feature>
<feature type="zinc finger region" description="C2H2-type 12" evidence="2">
    <location>
        <begin position="523"/>
        <end position="546"/>
    </location>
</feature>
<feature type="zinc finger region" description="C2H2-type 13" evidence="2">
    <location>
        <begin position="580"/>
        <end position="602"/>
    </location>
</feature>
<feature type="region of interest" description="Disordered" evidence="3">
    <location>
        <begin position="543"/>
        <end position="567"/>
    </location>
</feature>
<feature type="region of interest" description="Disordered" evidence="3">
    <location>
        <begin position="600"/>
        <end position="645"/>
    </location>
</feature>
<feature type="compositionally biased region" description="Basic and acidic residues" evidence="3">
    <location>
        <begin position="543"/>
        <end position="554"/>
    </location>
</feature>
<feature type="compositionally biased region" description="Basic and acidic residues" evidence="3">
    <location>
        <begin position="600"/>
        <end position="610"/>
    </location>
</feature>
<feature type="compositionally biased region" description="Polar residues" evidence="3">
    <location>
        <begin position="622"/>
        <end position="631"/>
    </location>
</feature>
<feature type="splice variant" id="VSP_007285" description="In isoform 4." evidence="7">
    <location>
        <begin position="1"/>
        <end position="219"/>
    </location>
</feature>
<feature type="splice variant" id="VSP_046896" description="In isoform 6." evidence="9">
    <original>IPG</original>
    <variation>S</variation>
    <location>
        <begin position="16"/>
        <end position="18"/>
    </location>
</feature>
<feature type="splice variant" id="VSP_060092" description="In isoform 2.">
    <location>
        <begin position="96"/>
        <end position="149"/>
    </location>
</feature>
<feature type="splice variant" id="VSP_007286" description="In isoform 4." evidence="7">
    <original>KHLRIHSDERPFKCQICPYASRNSSQLTVHLRSHT</original>
    <variation>MSRRKQAKPQHLNSEEPRPARRECAEVAPQVAGEP</variation>
    <location>
        <begin position="220"/>
        <end position="254"/>
    </location>
</feature>
<feature type="splice variant" id="VSP_046897" description="In isoform 6, isoform 1 and isoform 2." evidence="9">
    <location>
        <begin position="236"/>
        <end position="390"/>
    </location>
</feature>
<feature type="splice variant" id="VSP_038213" description="In isoform 5." evidence="8">
    <original>DTPFQ</original>
    <variation>CCYVA</variation>
    <location>
        <begin position="411"/>
        <end position="415"/>
    </location>
</feature>
<feature type="splice variant" id="VSP_046898" description="In isoform 6, isoform 1 and isoform 2." evidence="9">
    <original>TPFQCWLCSAKFKISSDLKRHMIVHSGEKPFKCEFCDVRCTMKANLKSHIRIKHTFKCLHCAFQGRDRADLLEHSRLHQADHPEKCPECSYSCSSAAALRVHSRVHCKDRPFKCDFCSFDTKRPSSLAKHVDKVHRDEAKTENRAPLGKEGLREGSSQHVAKIVTQRAFRCETCGASFVRDDSLRCHKKQHSDQSENKNSDLVTFPPESGASGQLSTLVSVGQLEAPLEPSQDL</original>
    <variation>APFQCWLCSAKFKISSDLKRHMRVHSGEKPFKCEFCNVRCTMKGNLKSHIRIKHSGNNFKCPHCDFLGDSKATLRKHSRVHQSEHPEKCSECSYSCSSKAALRIHERIHCTDRPFKCNYCSFDTKQPSNLSKHMKKFHGDMVKTEALERKDTGRQSSRQVAKLDAKKSFHCDICDASFMREDSLRSHKRQHSEYSESKNSDVTVLQFQIDPSKQPATPLTVGHLQVPLQPSQVPQFSEGRVKIIVGHQVPQANTIVQAAAAAVNIVPPALVAQNPEELPGNSRLQILRQVSLIAPPQSSRCPSEAGAMTQPAVLLTTHEQTDGATLHQTLIPTASGGPQEGSGNQTFITSSGITCTDFEGLNALIQEGTAEVTVVSDGGQNIAVATTAPPVFSSSSQQELPKQTYSIIQGAAHPALLCPADSIPD</variation>
    <location>
        <begin position="412"/>
        <end position="645"/>
    </location>
</feature>
<feature type="splice variant" id="VSP_038214" description="In isoform 5." evidence="8">
    <location>
        <begin position="416"/>
        <end position="645"/>
    </location>
</feature>
<feature type="sequence variant" id="VAR_028019" description="In dbSNP:rs7353222.">
    <original>Q</original>
    <variation>P</variation>
    <location>
        <position position="68"/>
    </location>
</feature>
<feature type="sequence variant" id="VAR_028020" description="In dbSNP:rs6021773.">
    <original>P</original>
    <variation>L</variation>
    <location>
        <position position="139"/>
    </location>
</feature>
<feature type="sequence variant" id="VAR_035564" description="In a breast cancer sample; somatic mutation; dbSNP:rs2078845353." evidence="5">
    <original>D</original>
    <variation>E</variation>
    <location>
        <position position="593"/>
    </location>
</feature>
<feature type="sequence variant" id="VAR_035565" description="In a breast cancer sample; somatic mutation." evidence="5">
    <original>K</original>
    <variation>N</variation>
    <location>
        <position position="609"/>
    </location>
</feature>
<feature type="sequence conflict" description="In Ref. 3; BAD96432." evidence="9" ref="3">
    <original>S</original>
    <variation>G</variation>
    <location>
        <position position="240"/>
    </location>
</feature>
<feature type="sequence conflict" description="In Ref. 2; AAP88762 and 6; BC021087." evidence="9" ref="2 6">
    <original>R</original>
    <variation>C</variation>
    <location>
        <position position="521"/>
    </location>
</feature>
<feature type="turn" evidence="14">
    <location>
        <begin position="178"/>
        <end position="180"/>
    </location>
</feature>
<feature type="helix" evidence="14">
    <location>
        <begin position="187"/>
        <end position="193"/>
    </location>
</feature>
<feature type="helix" evidence="14">
    <location>
        <begin position="194"/>
        <end position="196"/>
    </location>
</feature>
<feature type="strand" evidence="14">
    <location>
        <begin position="202"/>
        <end position="204"/>
    </location>
</feature>
<feature type="strand" evidence="14">
    <location>
        <begin position="206"/>
        <end position="208"/>
    </location>
</feature>
<feature type="strand" evidence="14">
    <location>
        <begin position="211"/>
        <end position="214"/>
    </location>
</feature>
<feature type="helix" evidence="14">
    <location>
        <begin position="215"/>
        <end position="224"/>
    </location>
</feature>
<feature type="strand" evidence="14">
    <location>
        <begin position="234"/>
        <end position="237"/>
    </location>
</feature>
<feature type="strand" evidence="14">
    <location>
        <begin position="239"/>
        <end position="242"/>
    </location>
</feature>
<feature type="helix" evidence="14">
    <location>
        <begin position="243"/>
        <end position="250"/>
    </location>
</feature>
<feature type="strand" evidence="13">
    <location>
        <begin position="494"/>
        <end position="496"/>
    </location>
</feature>
<feature type="strand" evidence="13">
    <location>
        <begin position="498"/>
        <end position="501"/>
    </location>
</feature>
<feature type="strand" evidence="13">
    <location>
        <begin position="503"/>
        <end position="506"/>
    </location>
</feature>
<feature type="helix" evidence="13">
    <location>
        <begin position="507"/>
        <end position="514"/>
    </location>
</feature>
<feature type="helix" evidence="13">
    <location>
        <begin position="515"/>
        <end position="517"/>
    </location>
</feature>
<feature type="strand" evidence="13">
    <location>
        <begin position="522"/>
        <end position="524"/>
    </location>
</feature>
<feature type="strand" evidence="13">
    <location>
        <begin position="526"/>
        <end position="529"/>
    </location>
</feature>
<feature type="strand" evidence="13">
    <location>
        <begin position="531"/>
        <end position="534"/>
    </location>
</feature>
<feature type="helix" evidence="13">
    <location>
        <begin position="535"/>
        <end position="546"/>
    </location>
</feature>
<feature type="modified residue" description="Phosphoserine" evidence="11">
    <location sequence="Q9NTW7-4">
        <position position="545"/>
    </location>
</feature>
<feature type="cross-link" description="Glycyl lysine isopeptide (Lys-Gly) (interchain with G-Cter in SUMO2)" evidence="12">
    <location sequence="Q9NTW7-4">
        <position position="286"/>
    </location>
</feature>
<feature type="cross-link" description="Glycyl lysine isopeptide (Lys-Gly) (interchain with G-Cter in SUMO2)" evidence="12">
    <location sequence="Q9NTW7-4">
        <position position="397"/>
    </location>
</feature>
<feature type="sequence variant" id="VAR_082942" description="In dbSNP:rs16996517." evidence="9">
    <original>F</original>
    <variation>Y</variation>
    <location sequence="Q9NTW7-5">
        <position position="425"/>
    </location>
</feature>
<feature type="sequence variant" id="VAR_082943" description="In dbSNP:rs3746414." evidence="4">
    <original>S</original>
    <variation>N</variation>
    <location sequence="Q9NTW7-5">
        <position position="451"/>
    </location>
</feature>
<comment type="function">
    <text evidence="1">May be involved in the regulation of mesenchymal cell differentiation through transactivation of NOTCH1 target genes.</text>
</comment>
<comment type="subunit">
    <text evidence="6">Interacts with ZNF70; this interaction promote the transactivation of the HES1 gene (PubMed:27353377). Interacts with NOTCH1 (PubMed:27353377).</text>
</comment>
<comment type="interaction">
    <interactant intactId="EBI-711679">
        <id>Q9NTW7</id>
    </interactant>
    <interactant intactId="EBI-8637627">
        <id>Q8WTP8</id>
        <label>AEN</label>
    </interactant>
    <organismsDiffer>false</organismsDiffer>
    <experiments>7</experiments>
</comment>
<comment type="interaction">
    <interactant intactId="EBI-711679">
        <id>Q9NTW7</id>
    </interactant>
    <interactant intactId="EBI-358049">
        <id>Q13895</id>
        <label>BYSL</label>
    </interactant>
    <organismsDiffer>false</organismsDiffer>
    <experiments>5</experiments>
</comment>
<comment type="interaction">
    <interactant intactId="EBI-711679">
        <id>Q9NTW7</id>
    </interactant>
    <interactant intactId="EBI-489887">
        <id>P50402</id>
        <label>EMD</label>
    </interactant>
    <organismsDiffer>false</organismsDiffer>
    <experiments>3</experiments>
</comment>
<comment type="interaction">
    <interactant intactId="EBI-711679">
        <id>Q9NTW7</id>
    </interactant>
    <interactant intactId="EBI-744506">
        <id>Q86V42</id>
        <label>FAM124A</label>
    </interactant>
    <organismsDiffer>false</organismsDiffer>
    <experiments>6</experiments>
</comment>
<comment type="interaction">
    <interactant intactId="EBI-711679">
        <id>Q9NTW7</id>
    </interactant>
    <interactant intactId="EBI-701903">
        <id>Q14192</id>
        <label>FHL2</label>
    </interactant>
    <organismsDiffer>false</organismsDiffer>
    <experiments>8</experiments>
</comment>
<comment type="interaction">
    <interactant intactId="EBI-711679">
        <id>Q9NTW7</id>
    </interactant>
    <interactant intactId="EBI-747754">
        <id>P28799</id>
        <label>GRN</label>
    </interactant>
    <organismsDiffer>false</organismsDiffer>
    <experiments>3</experiments>
</comment>
<comment type="interaction">
    <interactant intactId="EBI-711679">
        <id>Q9NTW7</id>
    </interactant>
    <interactant intactId="EBI-10330301">
        <id>V9HWH0</id>
        <label>HEL164</label>
    </interactant>
    <organismsDiffer>false</organismsDiffer>
    <experiments>6</experiments>
</comment>
<comment type="interaction">
    <interactant intactId="EBI-711679">
        <id>Q9NTW7</id>
    </interactant>
    <interactant intactId="EBI-739909">
        <id>Q969R5</id>
        <label>L3MBTL2</label>
    </interactant>
    <organismsDiffer>false</organismsDiffer>
    <experiments>3</experiments>
</comment>
<comment type="interaction">
    <interactant intactId="EBI-711679">
        <id>Q9NTW7</id>
    </interactant>
    <interactant intactId="EBI-739696">
        <id>P25791</id>
        <label>LMO2</label>
    </interactant>
    <organismsDiffer>false</organismsDiffer>
    <experiments>3</experiments>
</comment>
<comment type="interaction">
    <interactant intactId="EBI-711679">
        <id>Q9NTW7</id>
    </interactant>
    <interactant intactId="EBI-739832">
        <id>Q8TBB1</id>
        <label>LNX1</label>
    </interactant>
    <organismsDiffer>false</organismsDiffer>
    <experiments>4</experiments>
</comment>
<comment type="interaction">
    <interactant intactId="EBI-711679">
        <id>Q9NTW7</id>
    </interactant>
    <interactant intactId="EBI-1048159">
        <id>P55081</id>
        <label>MFAP1</label>
    </interactant>
    <organismsDiffer>false</organismsDiffer>
    <experiments>3</experiments>
</comment>
<comment type="interaction">
    <interactant intactId="EBI-711679">
        <id>Q9NTW7</id>
    </interactant>
    <interactant intactId="EBI-1567797">
        <id>Q8WWY3</id>
        <label>PRPF31</label>
    </interactant>
    <organismsDiffer>false</organismsDiffer>
    <experiments>3</experiments>
</comment>
<comment type="interaction">
    <interactant intactId="EBI-711679">
        <id>Q9NTW7</id>
    </interactant>
    <interactant intactId="EBI-721525">
        <id>P98175</id>
        <label>RBM10</label>
    </interactant>
    <organismsDiffer>false</organismsDiffer>
    <experiments>3</experiments>
</comment>
<comment type="interaction">
    <interactant intactId="EBI-711679">
        <id>Q9NTW7</id>
    </interactant>
    <interactant intactId="EBI-725997">
        <id>Q8WV44</id>
        <label>TRIM41</label>
    </interactant>
    <organismsDiffer>false</organismsDiffer>
    <experiments>7</experiments>
</comment>
<comment type="interaction">
    <interactant intactId="EBI-711679">
        <id>Q9NTW7</id>
    </interactant>
    <interactant intactId="EBI-720609">
        <id>O76024</id>
        <label>WFS1</label>
    </interactant>
    <organismsDiffer>false</organismsDiffer>
    <experiments>3</experiments>
</comment>
<comment type="interaction">
    <interactant intactId="EBI-23201521">
        <id>Q9NTW7-5</id>
    </interactant>
    <interactant intactId="EBI-358708">
        <id>Q9NYJ8</id>
        <label>TAB2</label>
    </interactant>
    <organismsDiffer>false</organismsDiffer>
    <experiments>3</experiments>
</comment>
<comment type="subcellular location">
    <subcellularLocation>
        <location evidence="6">Nucleus</location>
    </subcellularLocation>
</comment>
<comment type="alternative products">
    <event type="alternative splicing"/>
    <isoform>
        <id>Q9NTW7-1</id>
        <name>3</name>
        <sequence type="displayed"/>
    </isoform>
    <isoform>
        <id>Q9NTW7-2</id>
        <name>4</name>
        <name>ZNF338</name>
        <sequence type="described" ref="VSP_007285 VSP_007286"/>
    </isoform>
    <isoform>
        <id>Q9NTW7-3</id>
        <name>5</name>
        <sequence type="described" ref="VSP_038213 VSP_038214"/>
    </isoform>
    <isoform>
        <id>Q9NTW7-4</id>
        <name>6</name>
        <sequence type="described" ref="VSP_046896 VSP_046897 VSP_046898"/>
    </isoform>
    <isoform>
        <id>Q9NTW7-5</id>
        <name>1</name>
        <sequence type="described" ref="VSP_046897 VSP_046898"/>
    </isoform>
    <isoform>
        <id>Q9NTW7-6</id>
        <name>2</name>
        <sequence type="described" ref="VSP_060092 VSP_046897 VSP_046898"/>
    </isoform>
</comment>
<comment type="similarity">
    <text evidence="9">Belongs to the krueppel C2H2-type zinc-finger protein family.</text>
</comment>
<comment type="sequence caution" evidence="9">
    <conflict type="erroneous translation">
        <sequence resource="EMBL-CDS" id="BAD96432"/>
    </conflict>
    <text>Translation C-terminally extended.</text>
</comment>